<feature type="signal peptide" evidence="2">
    <location>
        <begin position="1"/>
        <end position="24"/>
    </location>
</feature>
<feature type="chain" id="PRO_0000278809" description="Twisted gastrulation protein homolog 1">
    <location>
        <begin position="25"/>
        <end position="222"/>
    </location>
</feature>
<feature type="glycosylation site" description="N-linked (GlcNAc...) asparagine" evidence="2">
    <location>
        <position position="80"/>
    </location>
</feature>
<feature type="glycosylation site" description="N-linked (GlcNAc...) asparagine" evidence="2">
    <location>
        <position position="146"/>
    </location>
</feature>
<feature type="sequence conflict" description="In Ref. 3; AAG10080." evidence="8" ref="3">
    <original>I</original>
    <variation>IA</variation>
    <location>
        <position position="6"/>
    </location>
</feature>
<feature type="sequence conflict" description="In Ref. 3; AAG10080 and 5; AAH04850." evidence="8" ref="3 5">
    <original>M</original>
    <variation>R</variation>
    <location>
        <position position="75"/>
    </location>
</feature>
<feature type="sequence conflict" description="In Ref. 4; BAC28326." evidence="8" ref="4">
    <original>V</original>
    <variation>E</variation>
    <location>
        <position position="168"/>
    </location>
</feature>
<feature type="sequence conflict" description="In Ref. 3; AAG10080." evidence="8" ref="3">
    <original>IG</original>
    <variation>MR</variation>
    <location>
        <begin position="203"/>
        <end position="204"/>
    </location>
</feature>
<dbReference type="EMBL" id="AJ297390">
    <property type="protein sequence ID" value="CAC05586.1"/>
    <property type="molecule type" value="mRNA"/>
</dbReference>
<dbReference type="EMBL" id="AF292033">
    <property type="protein sequence ID" value="AAG00605.1"/>
    <property type="molecule type" value="mRNA"/>
</dbReference>
<dbReference type="EMBL" id="AF295097">
    <property type="protein sequence ID" value="AAG10080.1"/>
    <property type="molecule type" value="mRNA"/>
</dbReference>
<dbReference type="EMBL" id="AK018524">
    <property type="protein sequence ID" value="BAC25557.1"/>
    <property type="molecule type" value="mRNA"/>
</dbReference>
<dbReference type="EMBL" id="AK033504">
    <property type="protein sequence ID" value="BAC28326.1"/>
    <property type="molecule type" value="mRNA"/>
</dbReference>
<dbReference type="EMBL" id="AK049646">
    <property type="protein sequence ID" value="BAC33857.1"/>
    <property type="molecule type" value="mRNA"/>
</dbReference>
<dbReference type="EMBL" id="AK168547">
    <property type="protein sequence ID" value="BAE40422.1"/>
    <property type="molecule type" value="mRNA"/>
</dbReference>
<dbReference type="EMBL" id="AK168633">
    <property type="protein sequence ID" value="BAE40493.1"/>
    <property type="molecule type" value="mRNA"/>
</dbReference>
<dbReference type="EMBL" id="BC004850">
    <property type="protein sequence ID" value="AAH04850.1"/>
    <property type="molecule type" value="mRNA"/>
</dbReference>
<dbReference type="CCDS" id="CCDS28942.1"/>
<dbReference type="RefSeq" id="NP_075540.1">
    <property type="nucleotide sequence ID" value="NM_023053.4"/>
</dbReference>
<dbReference type="SMR" id="Q9EP52"/>
<dbReference type="BioGRID" id="211157">
    <property type="interactions" value="2"/>
</dbReference>
<dbReference type="FunCoup" id="Q9EP52">
    <property type="interactions" value="575"/>
</dbReference>
<dbReference type="STRING" id="10090.ENSMUSP00000024906"/>
<dbReference type="GlyCosmos" id="Q9EP52">
    <property type="glycosylation" value="2 sites, No reported glycans"/>
</dbReference>
<dbReference type="GlyGen" id="Q9EP52">
    <property type="glycosylation" value="2 sites, 1 N-linked glycan (1 site)"/>
</dbReference>
<dbReference type="iPTMnet" id="Q9EP52"/>
<dbReference type="PhosphoSitePlus" id="Q9EP52"/>
<dbReference type="PaxDb" id="10090-ENSMUSP00000024906"/>
<dbReference type="PeptideAtlas" id="Q9EP52"/>
<dbReference type="ProteomicsDB" id="298391"/>
<dbReference type="Pumba" id="Q9EP52"/>
<dbReference type="Antibodypedia" id="2970">
    <property type="antibodies" value="116 antibodies from 23 providers"/>
</dbReference>
<dbReference type="Ensembl" id="ENSMUST00000024906.6">
    <property type="protein sequence ID" value="ENSMUSP00000024906.5"/>
    <property type="gene ID" value="ENSMUSG00000024098.7"/>
</dbReference>
<dbReference type="Ensembl" id="ENSMUST00000233580.2">
    <property type="protein sequence ID" value="ENSMUSP00000156695.2"/>
    <property type="gene ID" value="ENSMUSG00000024098.7"/>
</dbReference>
<dbReference type="GeneID" id="65960"/>
<dbReference type="KEGG" id="mmu:65960"/>
<dbReference type="UCSC" id="uc008dgq.2">
    <property type="organism name" value="mouse"/>
</dbReference>
<dbReference type="AGR" id="MGI:2137520"/>
<dbReference type="CTD" id="57045"/>
<dbReference type="MGI" id="MGI:2137520">
    <property type="gene designation" value="Twsg1"/>
</dbReference>
<dbReference type="VEuPathDB" id="HostDB:ENSMUSG00000024098"/>
<dbReference type="eggNOG" id="ENOG502QRE9">
    <property type="taxonomic scope" value="Eukaryota"/>
</dbReference>
<dbReference type="GeneTree" id="ENSGT00390000007058"/>
<dbReference type="HOGENOM" id="CLU_082511_1_0_1"/>
<dbReference type="InParanoid" id="Q9EP52"/>
<dbReference type="OMA" id="NCTVAFF"/>
<dbReference type="OrthoDB" id="10037323at2759"/>
<dbReference type="PhylomeDB" id="Q9EP52"/>
<dbReference type="TreeFam" id="TF323922"/>
<dbReference type="BioGRID-ORCS" id="65960">
    <property type="hits" value="4 hits in 76 CRISPR screens"/>
</dbReference>
<dbReference type="ChiTaRS" id="Twsg1">
    <property type="organism name" value="mouse"/>
</dbReference>
<dbReference type="PRO" id="PR:Q9EP52"/>
<dbReference type="Proteomes" id="UP000000589">
    <property type="component" value="Chromosome 17"/>
</dbReference>
<dbReference type="RNAct" id="Q9EP52">
    <property type="molecule type" value="protein"/>
</dbReference>
<dbReference type="Bgee" id="ENSMUSG00000024098">
    <property type="expression patterns" value="Expressed in cumulus cell and 267 other cell types or tissues"/>
</dbReference>
<dbReference type="ExpressionAtlas" id="Q9EP52">
    <property type="expression patterns" value="baseline and differential"/>
</dbReference>
<dbReference type="GO" id="GO:0005615">
    <property type="term" value="C:extracellular space"/>
    <property type="evidence" value="ECO:0000314"/>
    <property type="project" value="MGI"/>
</dbReference>
<dbReference type="GO" id="GO:0008201">
    <property type="term" value="F:heparin binding"/>
    <property type="evidence" value="ECO:0000314"/>
    <property type="project" value="MGI"/>
</dbReference>
<dbReference type="GO" id="GO:0050431">
    <property type="term" value="F:transforming growth factor beta binding"/>
    <property type="evidence" value="ECO:0007669"/>
    <property type="project" value="Ensembl"/>
</dbReference>
<dbReference type="GO" id="GO:0030509">
    <property type="term" value="P:BMP signaling pathway"/>
    <property type="evidence" value="ECO:0000316"/>
    <property type="project" value="MGI"/>
</dbReference>
<dbReference type="GO" id="GO:0043010">
    <property type="term" value="P:camera-type eye development"/>
    <property type="evidence" value="ECO:0000316"/>
    <property type="project" value="MGI"/>
</dbReference>
<dbReference type="GO" id="GO:0002062">
    <property type="term" value="P:chondrocyte differentiation"/>
    <property type="evidence" value="ECO:0000315"/>
    <property type="project" value="MGI"/>
</dbReference>
<dbReference type="GO" id="GO:0030900">
    <property type="term" value="P:forebrain development"/>
    <property type="evidence" value="ECO:0000315"/>
    <property type="project" value="MGI"/>
</dbReference>
<dbReference type="GO" id="GO:0030097">
    <property type="term" value="P:hemopoiesis"/>
    <property type="evidence" value="ECO:0000315"/>
    <property type="project" value="MGI"/>
</dbReference>
<dbReference type="GO" id="GO:0001707">
    <property type="term" value="P:mesoderm formation"/>
    <property type="evidence" value="ECO:0000316"/>
    <property type="project" value="MGI"/>
</dbReference>
<dbReference type="GO" id="GO:0030514">
    <property type="term" value="P:negative regulation of BMP signaling pathway"/>
    <property type="evidence" value="ECO:0000314"/>
    <property type="project" value="MGI"/>
</dbReference>
<dbReference type="GO" id="GO:2000562">
    <property type="term" value="P:negative regulation of CD4-positive, alpha-beta T cell proliferation"/>
    <property type="evidence" value="ECO:0007669"/>
    <property type="project" value="Ensembl"/>
</dbReference>
<dbReference type="GO" id="GO:0001818">
    <property type="term" value="P:negative regulation of cytokine production"/>
    <property type="evidence" value="ECO:0007669"/>
    <property type="project" value="Ensembl"/>
</dbReference>
<dbReference type="GO" id="GO:0045668">
    <property type="term" value="P:negative regulation of osteoblast differentiation"/>
    <property type="evidence" value="ECO:0000314"/>
    <property type="project" value="MGI"/>
</dbReference>
<dbReference type="GO" id="GO:0001503">
    <property type="term" value="P:ossification"/>
    <property type="evidence" value="ECO:0000315"/>
    <property type="project" value="MGI"/>
</dbReference>
<dbReference type="GO" id="GO:0030513">
    <property type="term" value="P:positive regulation of BMP signaling pathway"/>
    <property type="evidence" value="ECO:0000315"/>
    <property type="project" value="MGI"/>
</dbReference>
<dbReference type="GO" id="GO:0060391">
    <property type="term" value="P:positive regulation of SMAD protein signal transduction"/>
    <property type="evidence" value="ECO:0007669"/>
    <property type="project" value="Ensembl"/>
</dbReference>
<dbReference type="GO" id="GO:0030511">
    <property type="term" value="P:positive regulation of transforming growth factor beta receptor signaling pathway"/>
    <property type="evidence" value="ECO:0007669"/>
    <property type="project" value="Ensembl"/>
</dbReference>
<dbReference type="GO" id="GO:0007435">
    <property type="term" value="P:salivary gland morphogenesis"/>
    <property type="evidence" value="ECO:0000315"/>
    <property type="project" value="MGI"/>
</dbReference>
<dbReference type="GO" id="GO:0009888">
    <property type="term" value="P:tissue development"/>
    <property type="evidence" value="ECO:0000316"/>
    <property type="project" value="MGI"/>
</dbReference>
<dbReference type="InterPro" id="IPR006761">
    <property type="entry name" value="Tsg"/>
</dbReference>
<dbReference type="PANTHER" id="PTHR12312:SF17">
    <property type="entry name" value="TWISTED GASTRULATION PROTEIN HOMOLOG 1"/>
    <property type="match status" value="1"/>
</dbReference>
<dbReference type="PANTHER" id="PTHR12312">
    <property type="entry name" value="TWISTED GASTRULATION PROTEIN HOMOLOG 1-A-RELATED"/>
    <property type="match status" value="1"/>
</dbReference>
<dbReference type="Pfam" id="PF04668">
    <property type="entry name" value="Tsg"/>
    <property type="match status" value="1"/>
</dbReference>
<dbReference type="Pfam" id="PF23782">
    <property type="entry name" value="Tsg_N"/>
    <property type="match status" value="1"/>
</dbReference>
<proteinExistence type="evidence at protein level"/>
<gene>
    <name type="primary">Twsg1</name>
    <name type="synonym">Tsg</name>
</gene>
<accession>Q9EP52</accession>
<accession>Q8CCB1</accession>
<accession>Q8CEM6</accession>
<accession>Q99K77</accession>
<accession>Q9ERN7</accession>
<evidence type="ECO:0000250" key="1"/>
<evidence type="ECO:0000255" key="2"/>
<evidence type="ECO:0000269" key="3">
    <source>
    </source>
</evidence>
<evidence type="ECO:0000269" key="4">
    <source>
    </source>
</evidence>
<evidence type="ECO:0000269" key="5">
    <source>
    </source>
</evidence>
<evidence type="ECO:0000269" key="6">
    <source>
    </source>
</evidence>
<evidence type="ECO:0000269" key="7">
    <source>
    </source>
</evidence>
<evidence type="ECO:0000305" key="8"/>
<comment type="function">
    <text evidence="3 5 6 7">May be involved in dorsoventral axis formation. Seems to antagonize BMP signaling by forming ternary complexes with CHRD and BMPs, thereby preventing BMPs from binding to their receptors. In addition to the anti-BMP function, also has pro-BMP activity, partly mediated by cleavage and degradation of CHRD, which releases BMPs from ternary complexes. May be an important modulator of BMP-regulated cartilage development and chondrocyte differentiation. May play a role in thymocyte development.</text>
</comment>
<comment type="subunit">
    <text evidence="3 4 6">Interacts with CHRD and/or BMP4. This interaction enhances CHRD/BMP4 complex formation. Interacts with BMP7.</text>
</comment>
<comment type="subcellular location">
    <subcellularLocation>
        <location evidence="1">Secreted</location>
    </subcellularLocation>
</comment>
<comment type="tissue specificity">
    <text evidence="7">Expressed in lymph node, liver, kidney, and lung. Expression in the kidney was stronger in the medulla than in the cortex, particularly in the cells surrounding the medullary tubules. Expressed in growth plate cartilage of long bones, ribs, and digits and to a lesser extent also in the resting zone of the epiphysis, trabecular bone, and vertebral cartilage. Expression seems to be absent from other skeletal tissues including muscle, skin, and fibroblasts.</text>
</comment>
<comment type="developmental stage">
    <text evidence="3 6">Expressed at all embryonic stages examined. Expression was low and distribution was diffuse. At the primitive streak stage, detected in the extraembryonic region. Signal first appeared in the embryo during the neural plate stage. Stronger and more localized expression is seen after embryonic turning. Higher expression is seen in the branchial arch mesenchyme, the endoderm of the developing pharynx, all levels of the developing gut, the myotome compartment of the somites, and some regions of surface ectoderm. At 8.25 and 9.0 dpc expressed in head mesenchyme and ventral mesoderm.</text>
</comment>
<comment type="domain">
    <text evidence="1">The N-terminal domain is sufficient to interact with BMP4.</text>
</comment>
<comment type="disruption phenotype">
    <text evidence="6">Embryonic lethality and sirenomelia were observed only in BMP null embryos in which one or two copies of TSG were also missing. When TSG and BMP7 are mutated, the siren phenotype results from the fusion of the limb buds in the ventroposterior midline owing to a paucity of posterior ventral mesoderm.</text>
</comment>
<comment type="similarity">
    <text evidence="8">Belongs to the twisted gastrulation protein family.</text>
</comment>
<keyword id="KW-0217">Developmental protein</keyword>
<keyword id="KW-0325">Glycoprotein</keyword>
<keyword id="KW-1185">Reference proteome</keyword>
<keyword id="KW-0964">Secreted</keyword>
<keyword id="KW-0732">Signal</keyword>
<protein>
    <recommendedName>
        <fullName>Twisted gastrulation protein homolog 1</fullName>
    </recommendedName>
</protein>
<organism>
    <name type="scientific">Mus musculus</name>
    <name type="common">Mouse</name>
    <dbReference type="NCBI Taxonomy" id="10090"/>
    <lineage>
        <taxon>Eukaryota</taxon>
        <taxon>Metazoa</taxon>
        <taxon>Chordata</taxon>
        <taxon>Craniata</taxon>
        <taxon>Vertebrata</taxon>
        <taxon>Euteleostomi</taxon>
        <taxon>Mammalia</taxon>
        <taxon>Eutheria</taxon>
        <taxon>Euarchontoglires</taxon>
        <taxon>Glires</taxon>
        <taxon>Rodentia</taxon>
        <taxon>Myomorpha</taxon>
        <taxon>Muroidea</taxon>
        <taxon>Muridae</taxon>
        <taxon>Murinae</taxon>
        <taxon>Mus</taxon>
        <taxon>Mus</taxon>
    </lineage>
</organism>
<name>TWSG1_MOUSE</name>
<reference key="1">
    <citation type="journal article" date="2001" name="Mamm. Genome">
        <title>Evolutionary conservation, developmental expression, and genomic mapping of mammalian Twisted gastrulation.</title>
        <authorList>
            <person name="Graf D."/>
            <person name="Timmons P.M."/>
            <person name="Hitchins M."/>
            <person name="Episkopou V."/>
            <person name="Moore G."/>
            <person name="Ito T."/>
            <person name="Fujiyama A."/>
            <person name="Fisher A.G."/>
            <person name="Merkenschlager M."/>
        </authorList>
    </citation>
    <scope>NUCLEOTIDE SEQUENCE [MRNA]</scope>
    <scope>INTERACTION WITH CHRD AND BMP4</scope>
    <source>
        <tissue>Thymus</tissue>
    </source>
</reference>
<reference key="2">
    <citation type="submission" date="2000-08" db="EMBL/GenBank/DDBJ databases">
        <title>Characterization of the mouse homolog of Twisted gastrulation.</title>
        <authorList>
            <person name="Zakin L."/>
            <person name="Oelgeschlager M."/>
            <person name="Geissert D."/>
            <person name="De Robertis E.M."/>
        </authorList>
    </citation>
    <scope>NUCLEOTIDE SEQUENCE [MRNA]</scope>
</reference>
<reference key="3">
    <citation type="submission" date="2000-08" db="EMBL/GenBank/DDBJ databases">
        <title>Mouse twisted gastrulation protein: a new signal pathway of spermatogenesis.</title>
        <authorList>
            <person name="Li J.M."/>
            <person name="Sha J.H."/>
            <person name="Zhou Z.M."/>
        </authorList>
    </citation>
    <scope>NUCLEOTIDE SEQUENCE [MRNA]</scope>
    <source>
        <tissue>Testis</tissue>
    </source>
</reference>
<reference key="4">
    <citation type="journal article" date="2005" name="Science">
        <title>The transcriptional landscape of the mammalian genome.</title>
        <authorList>
            <person name="Carninci P."/>
            <person name="Kasukawa T."/>
            <person name="Katayama S."/>
            <person name="Gough J."/>
            <person name="Frith M.C."/>
            <person name="Maeda N."/>
            <person name="Oyama R."/>
            <person name="Ravasi T."/>
            <person name="Lenhard B."/>
            <person name="Wells C."/>
            <person name="Kodzius R."/>
            <person name="Shimokawa K."/>
            <person name="Bajic V.B."/>
            <person name="Brenner S.E."/>
            <person name="Batalov S."/>
            <person name="Forrest A.R."/>
            <person name="Zavolan M."/>
            <person name="Davis M.J."/>
            <person name="Wilming L.G."/>
            <person name="Aidinis V."/>
            <person name="Allen J.E."/>
            <person name="Ambesi-Impiombato A."/>
            <person name="Apweiler R."/>
            <person name="Aturaliya R.N."/>
            <person name="Bailey T.L."/>
            <person name="Bansal M."/>
            <person name="Baxter L."/>
            <person name="Beisel K.W."/>
            <person name="Bersano T."/>
            <person name="Bono H."/>
            <person name="Chalk A.M."/>
            <person name="Chiu K.P."/>
            <person name="Choudhary V."/>
            <person name="Christoffels A."/>
            <person name="Clutterbuck D.R."/>
            <person name="Crowe M.L."/>
            <person name="Dalla E."/>
            <person name="Dalrymple B.P."/>
            <person name="de Bono B."/>
            <person name="Della Gatta G."/>
            <person name="di Bernardo D."/>
            <person name="Down T."/>
            <person name="Engstrom P."/>
            <person name="Fagiolini M."/>
            <person name="Faulkner G."/>
            <person name="Fletcher C.F."/>
            <person name="Fukushima T."/>
            <person name="Furuno M."/>
            <person name="Futaki S."/>
            <person name="Gariboldi M."/>
            <person name="Georgii-Hemming P."/>
            <person name="Gingeras T.R."/>
            <person name="Gojobori T."/>
            <person name="Green R.E."/>
            <person name="Gustincich S."/>
            <person name="Harbers M."/>
            <person name="Hayashi Y."/>
            <person name="Hensch T.K."/>
            <person name="Hirokawa N."/>
            <person name="Hill D."/>
            <person name="Huminiecki L."/>
            <person name="Iacono M."/>
            <person name="Ikeo K."/>
            <person name="Iwama A."/>
            <person name="Ishikawa T."/>
            <person name="Jakt M."/>
            <person name="Kanapin A."/>
            <person name="Katoh M."/>
            <person name="Kawasawa Y."/>
            <person name="Kelso J."/>
            <person name="Kitamura H."/>
            <person name="Kitano H."/>
            <person name="Kollias G."/>
            <person name="Krishnan S.P."/>
            <person name="Kruger A."/>
            <person name="Kummerfeld S.K."/>
            <person name="Kurochkin I.V."/>
            <person name="Lareau L.F."/>
            <person name="Lazarevic D."/>
            <person name="Lipovich L."/>
            <person name="Liu J."/>
            <person name="Liuni S."/>
            <person name="McWilliam S."/>
            <person name="Madan Babu M."/>
            <person name="Madera M."/>
            <person name="Marchionni L."/>
            <person name="Matsuda H."/>
            <person name="Matsuzawa S."/>
            <person name="Miki H."/>
            <person name="Mignone F."/>
            <person name="Miyake S."/>
            <person name="Morris K."/>
            <person name="Mottagui-Tabar S."/>
            <person name="Mulder N."/>
            <person name="Nakano N."/>
            <person name="Nakauchi H."/>
            <person name="Ng P."/>
            <person name="Nilsson R."/>
            <person name="Nishiguchi S."/>
            <person name="Nishikawa S."/>
            <person name="Nori F."/>
            <person name="Ohara O."/>
            <person name="Okazaki Y."/>
            <person name="Orlando V."/>
            <person name="Pang K.C."/>
            <person name="Pavan W.J."/>
            <person name="Pavesi G."/>
            <person name="Pesole G."/>
            <person name="Petrovsky N."/>
            <person name="Piazza S."/>
            <person name="Reed J."/>
            <person name="Reid J.F."/>
            <person name="Ring B.Z."/>
            <person name="Ringwald M."/>
            <person name="Rost B."/>
            <person name="Ruan Y."/>
            <person name="Salzberg S.L."/>
            <person name="Sandelin A."/>
            <person name="Schneider C."/>
            <person name="Schoenbach C."/>
            <person name="Sekiguchi K."/>
            <person name="Semple C.A."/>
            <person name="Seno S."/>
            <person name="Sessa L."/>
            <person name="Sheng Y."/>
            <person name="Shibata Y."/>
            <person name="Shimada H."/>
            <person name="Shimada K."/>
            <person name="Silva D."/>
            <person name="Sinclair B."/>
            <person name="Sperling S."/>
            <person name="Stupka E."/>
            <person name="Sugiura K."/>
            <person name="Sultana R."/>
            <person name="Takenaka Y."/>
            <person name="Taki K."/>
            <person name="Tammoja K."/>
            <person name="Tan S.L."/>
            <person name="Tang S."/>
            <person name="Taylor M.S."/>
            <person name="Tegner J."/>
            <person name="Teichmann S.A."/>
            <person name="Ueda H.R."/>
            <person name="van Nimwegen E."/>
            <person name="Verardo R."/>
            <person name="Wei C.L."/>
            <person name="Yagi K."/>
            <person name="Yamanishi H."/>
            <person name="Zabarovsky E."/>
            <person name="Zhu S."/>
            <person name="Zimmer A."/>
            <person name="Hide W."/>
            <person name="Bult C."/>
            <person name="Grimmond S.M."/>
            <person name="Teasdale R.D."/>
            <person name="Liu E.T."/>
            <person name="Brusic V."/>
            <person name="Quackenbush J."/>
            <person name="Wahlestedt C."/>
            <person name="Mattick J.S."/>
            <person name="Hume D.A."/>
            <person name="Kai C."/>
            <person name="Sasaki D."/>
            <person name="Tomaru Y."/>
            <person name="Fukuda S."/>
            <person name="Kanamori-Katayama M."/>
            <person name="Suzuki M."/>
            <person name="Aoki J."/>
            <person name="Arakawa T."/>
            <person name="Iida J."/>
            <person name="Imamura K."/>
            <person name="Itoh M."/>
            <person name="Kato T."/>
            <person name="Kawaji H."/>
            <person name="Kawagashira N."/>
            <person name="Kawashima T."/>
            <person name="Kojima M."/>
            <person name="Kondo S."/>
            <person name="Konno H."/>
            <person name="Nakano K."/>
            <person name="Ninomiya N."/>
            <person name="Nishio T."/>
            <person name="Okada M."/>
            <person name="Plessy C."/>
            <person name="Shibata K."/>
            <person name="Shiraki T."/>
            <person name="Suzuki S."/>
            <person name="Tagami M."/>
            <person name="Waki K."/>
            <person name="Watahiki A."/>
            <person name="Okamura-Oho Y."/>
            <person name="Suzuki H."/>
            <person name="Kawai J."/>
            <person name="Hayashizaki Y."/>
        </authorList>
    </citation>
    <scope>NUCLEOTIDE SEQUENCE [LARGE SCALE MRNA]</scope>
    <source>
        <strain>C57BL/6J</strain>
        <tissue>Amnion</tissue>
        <tissue>Colon</tissue>
        <tissue>Liver</tissue>
        <tissue>Spinal cord</tissue>
    </source>
</reference>
<reference key="5">
    <citation type="journal article" date="2004" name="Genome Res.">
        <title>The status, quality, and expansion of the NIH full-length cDNA project: the Mammalian Gene Collection (MGC).</title>
        <authorList>
            <consortium name="The MGC Project Team"/>
        </authorList>
    </citation>
    <scope>NUCLEOTIDE SEQUENCE [LARGE SCALE MRNA]</scope>
    <source>
        <tissue>Mammary tumor</tissue>
    </source>
</reference>
<reference key="6">
    <citation type="journal article" date="2001" name="Nature">
        <title>Homologues of Twisted gastrulation are extracellular cofactors in antagonism of BMP signalling.</title>
        <authorList>
            <person name="Scott I.C."/>
            <person name="Blitz I.L."/>
            <person name="Pappano W.N."/>
            <person name="Maas S.A."/>
            <person name="Cho K.W.Y."/>
            <person name="Greenspan D.S."/>
        </authorList>
    </citation>
    <scope>FUNCTION</scope>
    <scope>DEVELOPMENTAL STAGE</scope>
    <scope>INTERACTION WITH CHRD AND BMP4</scope>
</reference>
<reference key="7">
    <citation type="journal article" date="2001" name="Nature">
        <authorList>
            <person name="Scott I.C."/>
            <person name="Blitz I.L."/>
            <person name="Pappano W.N."/>
            <person name="Maas S.A."/>
            <person name="Cho K.W.Y."/>
            <person name="Greenspan D.S."/>
        </authorList>
    </citation>
    <scope>ERRATUM OF PUBMED:11260715</scope>
</reference>
<reference key="8">
    <citation type="journal article" date="2002" name="J. Exp. Med.">
        <title>The developmentally regulated expression of Twisted gastrulation reveals a role for bone morphogenetic proteins in the control of T cell development.</title>
        <authorList>
            <person name="Graf D."/>
            <person name="Nethisinghe S."/>
            <person name="Palmer D.B."/>
            <person name="Fisher A.G."/>
            <person name="Merkenschlager M."/>
        </authorList>
    </citation>
    <scope>FUNCTION</scope>
</reference>
<reference key="9">
    <citation type="journal article" date="2005" name="Development">
        <title>Sirenomelia in Bmp7 and Tsg compound mutant mice: requirement for Bmp signaling in the development of ventral posterior mesoderm.</title>
        <authorList>
            <person name="Zakin L."/>
            <person name="Reversade B."/>
            <person name="Kuroda H."/>
            <person name="Lyons K.M."/>
            <person name="De Robertis E.M."/>
        </authorList>
    </citation>
    <scope>FUNCTION</scope>
    <scope>DEVELOPMENTAL STAGE</scope>
    <scope>DISRUPTION PHENOTYPE</scope>
    <scope>INTERACTION WITH BMP7</scope>
</reference>
<reference key="10">
    <citation type="journal article" date="2006" name="J. Biol. Chem.">
        <title>Twisted gastrulation modulates bone morphogenetic protein-induced collagen II and X expression in chondrocytes in vitro and in vivo.</title>
        <authorList>
            <person name="Schmidl M."/>
            <person name="Adam N."/>
            <person name="Surmann-Schmitt C."/>
            <person name="Hattori T."/>
            <person name="Stock M."/>
            <person name="Dietz U."/>
            <person name="de Crombrugghe B."/>
            <person name="Poeschl E."/>
            <person name="von der Mark K."/>
        </authorList>
    </citation>
    <scope>FUNCTION</scope>
    <scope>TISSUE SPECIFICITY</scope>
</reference>
<sequence>MKSHYIVLALASLTFLLCLPVSQSCNKALCASDVSKCLIQELCQCRPGEGNCPCCKECMLCLGALWDECCDCVGMCNPRNYSDTPPTSKSTVEELHEPIPSLFRALTEGDTQLNWNIVSFPVAEELSHHENLVSFLETVNQLHHQNVSVPSNNVHAPFPSDKERMCTVVYFDDCMSIHQCKISCESMGASKYRWFHNACCECIGPECIDYGSKTVKCMNCMF</sequence>